<name>LICA_MYCCT</name>
<organism>
    <name type="scientific">Mycoplasma capricolum subsp. capricolum (strain California kid / ATCC 27343 / NCTC 10154)</name>
    <dbReference type="NCBI Taxonomy" id="340047"/>
    <lineage>
        <taxon>Bacteria</taxon>
        <taxon>Bacillati</taxon>
        <taxon>Mycoplasmatota</taxon>
        <taxon>Mollicutes</taxon>
        <taxon>Mycoplasmataceae</taxon>
        <taxon>Mycoplasma</taxon>
    </lineage>
</organism>
<evidence type="ECO:0000305" key="1"/>
<proteinExistence type="inferred from homology"/>
<sequence>MKMKITKGGTNVSYRIDNTFLQIKNYNSFNHQINYELLKDFDFVPKLISNDQKEIVWEYVEGNEPVVDLNNIKAITNQIKQLHNSNLNFPKNNLKQRVQYYRQKMVELNSGIEIIDKYANLIDDILDKMDHSTPLHNDLFPFNMIETKNKIYFVDWEYATMGDKHFELAYLIETSNMNSECEKVFLDLYSDYDSYKLLLNKIFVNYIVILWIRTQTSAPYNTTFFEQKIINYVTKLTN</sequence>
<protein>
    <recommendedName>
        <fullName>Protein LicA homolog</fullName>
    </recommendedName>
</protein>
<comment type="similarity">
    <text evidence="1">Belongs to the peptidase S49 family.</text>
</comment>
<reference key="1">
    <citation type="journal article" date="1993" name="Nucleic Acids Res.">
        <title>Mapping of replication initiation site in Mycoplasma capricolum genome by two-dimensional gel-electrophoretic analysis.</title>
        <authorList>
            <person name="Miyata M."/>
            <person name="Sano K."/>
            <person name="Okada R."/>
            <person name="Fukumura T."/>
        </authorList>
    </citation>
    <scope>NUCLEOTIDE SEQUENCE [GENOMIC DNA]</scope>
</reference>
<reference key="2">
    <citation type="submission" date="2005-09" db="EMBL/GenBank/DDBJ databases">
        <authorList>
            <person name="Glass J.I."/>
            <person name="Lartigue C."/>
            <person name="Pfannkoch C."/>
            <person name="Baden-Tillson H."/>
            <person name="Smith H.O."/>
            <person name="Venter J.C."/>
            <person name="Roske K."/>
            <person name="Wise K.S."/>
            <person name="Calcutt M.J."/>
            <person name="Nelson W.C."/>
            <person name="Nierman W.C."/>
        </authorList>
    </citation>
    <scope>NUCLEOTIDE SEQUENCE [LARGE SCALE GENOMIC DNA]</scope>
    <source>
        <strain>California kid / ATCC 27343 / NCTC 10154</strain>
    </source>
</reference>
<gene>
    <name type="primary">licA</name>
    <name type="ordered locus">MCAP_0866</name>
</gene>
<accession>P43044</accession>
<accession>Q2SR05</accession>
<feature type="chain" id="PRO_0000171453" description="Protein LicA homolog">
    <location>
        <begin position="1"/>
        <end position="238"/>
    </location>
</feature>
<dbReference type="EMBL" id="D14982">
    <property type="protein sequence ID" value="BAA03622.1"/>
    <property type="molecule type" value="Genomic_DNA"/>
</dbReference>
<dbReference type="EMBL" id="CP000123">
    <property type="protein sequence ID" value="ABC01532.1"/>
    <property type="molecule type" value="Genomic_DNA"/>
</dbReference>
<dbReference type="PIR" id="S42124">
    <property type="entry name" value="S42124"/>
</dbReference>
<dbReference type="RefSeq" id="WP_011387692.1">
    <property type="nucleotide sequence ID" value="NC_007633.1"/>
</dbReference>
<dbReference type="SMR" id="P43044"/>
<dbReference type="GeneID" id="23778181"/>
<dbReference type="KEGG" id="mcp:MCAP_0866"/>
<dbReference type="HOGENOM" id="CLU_1123571_0_0_14"/>
<dbReference type="PhylomeDB" id="P43044"/>
<dbReference type="Proteomes" id="UP000001928">
    <property type="component" value="Chromosome"/>
</dbReference>
<dbReference type="Gene3D" id="3.90.1200.10">
    <property type="match status" value="1"/>
</dbReference>
<dbReference type="InterPro" id="IPR002575">
    <property type="entry name" value="Aminoglycoside_PTrfase"/>
</dbReference>
<dbReference type="InterPro" id="IPR052077">
    <property type="entry name" value="CcrZ_PhaseVar_Mediator"/>
</dbReference>
<dbReference type="InterPro" id="IPR011009">
    <property type="entry name" value="Kinase-like_dom_sf"/>
</dbReference>
<dbReference type="PANTHER" id="PTHR40086:SF1">
    <property type="entry name" value="CELL CYCLE REGULATOR CCRZ"/>
    <property type="match status" value="1"/>
</dbReference>
<dbReference type="PANTHER" id="PTHR40086">
    <property type="entry name" value="PHOSPHOTRANSFERASE YTMP-RELATED"/>
    <property type="match status" value="1"/>
</dbReference>
<dbReference type="Pfam" id="PF01636">
    <property type="entry name" value="APH"/>
    <property type="match status" value="1"/>
</dbReference>
<dbReference type="SUPFAM" id="SSF56112">
    <property type="entry name" value="Protein kinase-like (PK-like)"/>
    <property type="match status" value="1"/>
</dbReference>